<dbReference type="EC" id="7.-.-.-" evidence="1"/>
<dbReference type="EMBL" id="AP009240">
    <property type="protein sequence ID" value="BAG77275.1"/>
    <property type="molecule type" value="Genomic_DNA"/>
</dbReference>
<dbReference type="RefSeq" id="WP_000915689.1">
    <property type="nucleotide sequence ID" value="NC_011415.1"/>
</dbReference>
<dbReference type="SMR" id="B6IB67"/>
<dbReference type="KEGG" id="ecy:ECSE_1751"/>
<dbReference type="HOGENOM" id="CLU_010808_2_1_6"/>
<dbReference type="Proteomes" id="UP000008199">
    <property type="component" value="Chromosome"/>
</dbReference>
<dbReference type="GO" id="GO:0005886">
    <property type="term" value="C:plasma membrane"/>
    <property type="evidence" value="ECO:0007669"/>
    <property type="project" value="UniProtKB-SubCell"/>
</dbReference>
<dbReference type="GO" id="GO:0051539">
    <property type="term" value="F:4 iron, 4 sulfur cluster binding"/>
    <property type="evidence" value="ECO:0007669"/>
    <property type="project" value="UniProtKB-KW"/>
</dbReference>
<dbReference type="GO" id="GO:0009055">
    <property type="term" value="F:electron transfer activity"/>
    <property type="evidence" value="ECO:0007669"/>
    <property type="project" value="InterPro"/>
</dbReference>
<dbReference type="GO" id="GO:0046872">
    <property type="term" value="F:metal ion binding"/>
    <property type="evidence" value="ECO:0007669"/>
    <property type="project" value="UniProtKB-KW"/>
</dbReference>
<dbReference type="GO" id="GO:0022900">
    <property type="term" value="P:electron transport chain"/>
    <property type="evidence" value="ECO:0007669"/>
    <property type="project" value="UniProtKB-UniRule"/>
</dbReference>
<dbReference type="Gene3D" id="3.30.70.20">
    <property type="match status" value="1"/>
</dbReference>
<dbReference type="Gene3D" id="3.40.50.11540">
    <property type="entry name" value="NADH-ubiquinone oxidoreductase 51kDa subunit"/>
    <property type="match status" value="1"/>
</dbReference>
<dbReference type="HAMAP" id="MF_00461">
    <property type="entry name" value="RsxC_RnfC"/>
    <property type="match status" value="1"/>
</dbReference>
<dbReference type="InterPro" id="IPR017896">
    <property type="entry name" value="4Fe4S_Fe-S-bd"/>
</dbReference>
<dbReference type="InterPro" id="IPR017900">
    <property type="entry name" value="4Fe4S_Fe_S_CS"/>
</dbReference>
<dbReference type="InterPro" id="IPR010208">
    <property type="entry name" value="Ion_transpt_RnfC/RsxC"/>
</dbReference>
<dbReference type="InterPro" id="IPR011538">
    <property type="entry name" value="Nuo51_FMN-bd"/>
</dbReference>
<dbReference type="InterPro" id="IPR037225">
    <property type="entry name" value="Nuo51_FMN-bd_sf"/>
</dbReference>
<dbReference type="InterPro" id="IPR026902">
    <property type="entry name" value="RnfC_N"/>
</dbReference>
<dbReference type="InterPro" id="IPR019554">
    <property type="entry name" value="Soluble_ligand-bd"/>
</dbReference>
<dbReference type="NCBIfam" id="NF003454">
    <property type="entry name" value="PRK05035.1"/>
    <property type="match status" value="1"/>
</dbReference>
<dbReference type="NCBIfam" id="TIGR01945">
    <property type="entry name" value="rnfC"/>
    <property type="match status" value="1"/>
</dbReference>
<dbReference type="PANTHER" id="PTHR43034">
    <property type="entry name" value="ION-TRANSLOCATING OXIDOREDUCTASE COMPLEX SUBUNIT C"/>
    <property type="match status" value="1"/>
</dbReference>
<dbReference type="PANTHER" id="PTHR43034:SF2">
    <property type="entry name" value="ION-TRANSLOCATING OXIDOREDUCTASE COMPLEX SUBUNIT C"/>
    <property type="match status" value="1"/>
</dbReference>
<dbReference type="Pfam" id="PF01512">
    <property type="entry name" value="Complex1_51K"/>
    <property type="match status" value="1"/>
</dbReference>
<dbReference type="Pfam" id="PF12838">
    <property type="entry name" value="Fer4_7"/>
    <property type="match status" value="1"/>
</dbReference>
<dbReference type="Pfam" id="PF13375">
    <property type="entry name" value="RnfC_N"/>
    <property type="match status" value="1"/>
</dbReference>
<dbReference type="Pfam" id="PF10531">
    <property type="entry name" value="SLBB"/>
    <property type="match status" value="1"/>
</dbReference>
<dbReference type="SUPFAM" id="SSF46548">
    <property type="entry name" value="alpha-helical ferredoxin"/>
    <property type="match status" value="1"/>
</dbReference>
<dbReference type="SUPFAM" id="SSF142019">
    <property type="entry name" value="Nqo1 FMN-binding domain-like"/>
    <property type="match status" value="1"/>
</dbReference>
<dbReference type="PROSITE" id="PS00198">
    <property type="entry name" value="4FE4S_FER_1"/>
    <property type="match status" value="2"/>
</dbReference>
<dbReference type="PROSITE" id="PS51379">
    <property type="entry name" value="4FE4S_FER_2"/>
    <property type="match status" value="2"/>
</dbReference>
<protein>
    <recommendedName>
        <fullName evidence="1">Ion-translocating oxidoreductase complex subunit C</fullName>
        <ecNumber evidence="1">7.-.-.-</ecNumber>
    </recommendedName>
    <alternativeName>
        <fullName evidence="1">Rsx electron transport complex subunit C</fullName>
    </alternativeName>
</protein>
<name>RSXC_ECOSE</name>
<organism>
    <name type="scientific">Escherichia coli (strain SE11)</name>
    <dbReference type="NCBI Taxonomy" id="409438"/>
    <lineage>
        <taxon>Bacteria</taxon>
        <taxon>Pseudomonadati</taxon>
        <taxon>Pseudomonadota</taxon>
        <taxon>Gammaproteobacteria</taxon>
        <taxon>Enterobacterales</taxon>
        <taxon>Enterobacteriaceae</taxon>
        <taxon>Escherichia</taxon>
    </lineage>
</organism>
<accession>B6IB67</accession>
<keyword id="KW-0004">4Fe-4S</keyword>
<keyword id="KW-0997">Cell inner membrane</keyword>
<keyword id="KW-1003">Cell membrane</keyword>
<keyword id="KW-0249">Electron transport</keyword>
<keyword id="KW-0408">Iron</keyword>
<keyword id="KW-0411">Iron-sulfur</keyword>
<keyword id="KW-0472">Membrane</keyword>
<keyword id="KW-0479">Metal-binding</keyword>
<keyword id="KW-0677">Repeat</keyword>
<keyword id="KW-1278">Translocase</keyword>
<keyword id="KW-0813">Transport</keyword>
<reference key="1">
    <citation type="journal article" date="2008" name="DNA Res.">
        <title>Complete genome sequence and comparative analysis of the wild-type commensal Escherichia coli strain SE11 isolated from a healthy adult.</title>
        <authorList>
            <person name="Oshima K."/>
            <person name="Toh H."/>
            <person name="Ogura Y."/>
            <person name="Sasamoto H."/>
            <person name="Morita H."/>
            <person name="Park S.-H."/>
            <person name="Ooka T."/>
            <person name="Iyoda S."/>
            <person name="Taylor T.D."/>
            <person name="Hayashi T."/>
            <person name="Itoh K."/>
            <person name="Hattori M."/>
        </authorList>
    </citation>
    <scope>NUCLEOTIDE SEQUENCE [LARGE SCALE GENOMIC DNA]</scope>
    <source>
        <strain>SE11</strain>
    </source>
</reference>
<proteinExistence type="inferred from homology"/>
<sequence>MLKLFSAFRKNKIWDFNGGIHPPEMKTQSNGTPLRQVPLAQRFVIPLKQHIGAEGELCVSVGDKVLRGQPLTRGRGKMLPVHAPTSGTVTAIAPHSTAHPSALAELSVIIDADGEDCWIPRDGWADYRSRRREELIERIHQFGVAGLGGAGFPTGVKLQGGGDKIETLIINAAECEPYITADDRLMQDCAAQVVEGIRILAHILQPREILIGIEDNKPQAISMLRAVLADSHDISLRVIPTKYPSGGAKQLTYILTGKQVPHGGRSSDIGVLMQNVGTAYAVKRAVIDGEPITERVVTLTGEAIARPGNVWARLGTPVRHLLNDAGFCPSADQMVIMGGPLMGFTLPWLDVPVVKITNCLLAPSANELGEPQEEQSCIRCSACADACPADLLPQQLYWFSKGQQHDKATTHNIADCIECGACAWVCPSNIPLVQYFRQEKAEIAAIRQEEKRAAEAKARFEARQARLEREKAARLERHKSAAVQPAAKDKDAIAAALARVKEKQAQATQPIVIKAGERPDNSAIIAAREARKAQARAKQAELQQTNDAATVADPRKTAVEAAIARAKARKLEQQQANAEPEEQVDPRKAAVEAAIARAKARKLEQQQANAEPEEQVDPRKAAVEAAIARAKARKLEQQQSNAEPEEQVDPRKAAVEAAIARAKARKLEQQQANAEPEEQVDPRKAAVEAAIARAKARKLEQQQTNAEPEEQVDPRKAAVAAAIARAQAKKAAQQKVVNED</sequence>
<feature type="chain" id="PRO_1000194509" description="Ion-translocating oxidoreductase complex subunit C">
    <location>
        <begin position="1"/>
        <end position="740"/>
    </location>
</feature>
<feature type="domain" description="4Fe-4S ferredoxin-type 1" evidence="1">
    <location>
        <begin position="369"/>
        <end position="397"/>
    </location>
</feature>
<feature type="domain" description="4Fe-4S ferredoxin-type 2" evidence="1">
    <location>
        <begin position="407"/>
        <end position="436"/>
    </location>
</feature>
<feature type="region of interest" description="Disordered" evidence="2">
    <location>
        <begin position="602"/>
        <end position="716"/>
    </location>
</feature>
<feature type="binding site" evidence="1">
    <location>
        <position position="377"/>
    </location>
    <ligand>
        <name>[4Fe-4S] cluster</name>
        <dbReference type="ChEBI" id="CHEBI:49883"/>
        <label>1</label>
    </ligand>
</feature>
<feature type="binding site" evidence="1">
    <location>
        <position position="380"/>
    </location>
    <ligand>
        <name>[4Fe-4S] cluster</name>
        <dbReference type="ChEBI" id="CHEBI:49883"/>
        <label>1</label>
    </ligand>
</feature>
<feature type="binding site" evidence="1">
    <location>
        <position position="383"/>
    </location>
    <ligand>
        <name>[4Fe-4S] cluster</name>
        <dbReference type="ChEBI" id="CHEBI:49883"/>
        <label>1</label>
    </ligand>
</feature>
<feature type="binding site" evidence="1">
    <location>
        <position position="387"/>
    </location>
    <ligand>
        <name>[4Fe-4S] cluster</name>
        <dbReference type="ChEBI" id="CHEBI:49883"/>
        <label>2</label>
    </ligand>
</feature>
<feature type="binding site" evidence="1">
    <location>
        <position position="416"/>
    </location>
    <ligand>
        <name>[4Fe-4S] cluster</name>
        <dbReference type="ChEBI" id="CHEBI:49883"/>
        <label>2</label>
    </ligand>
</feature>
<feature type="binding site" evidence="1">
    <location>
        <position position="419"/>
    </location>
    <ligand>
        <name>[4Fe-4S] cluster</name>
        <dbReference type="ChEBI" id="CHEBI:49883"/>
        <label>2</label>
    </ligand>
</feature>
<feature type="binding site" evidence="1">
    <location>
        <position position="422"/>
    </location>
    <ligand>
        <name>[4Fe-4S] cluster</name>
        <dbReference type="ChEBI" id="CHEBI:49883"/>
        <label>2</label>
    </ligand>
</feature>
<feature type="binding site" evidence="1">
    <location>
        <position position="426"/>
    </location>
    <ligand>
        <name>[4Fe-4S] cluster</name>
        <dbReference type="ChEBI" id="CHEBI:49883"/>
        <label>1</label>
    </ligand>
</feature>
<evidence type="ECO:0000255" key="1">
    <source>
        <dbReference type="HAMAP-Rule" id="MF_00461"/>
    </source>
</evidence>
<evidence type="ECO:0000256" key="2">
    <source>
        <dbReference type="SAM" id="MobiDB-lite"/>
    </source>
</evidence>
<gene>
    <name evidence="1" type="primary">rsxC</name>
    <name type="ordered locus">ECSE_1751</name>
</gene>
<comment type="function">
    <text evidence="1">Part of a membrane-bound complex that couples electron transfer with translocation of ions across the membrane. Required to maintain the reduced state of SoxR.</text>
</comment>
<comment type="cofactor">
    <cofactor evidence="1">
        <name>[4Fe-4S] cluster</name>
        <dbReference type="ChEBI" id="CHEBI:49883"/>
    </cofactor>
    <text evidence="1">Binds 2 [4Fe-4S] clusters per subunit.</text>
</comment>
<comment type="subunit">
    <text evidence="1">The complex is composed of six subunits: RsxA, RsxB, RsxC, RsxD, RsxE and RsxG.</text>
</comment>
<comment type="subcellular location">
    <subcellularLocation>
        <location evidence="1">Cell inner membrane</location>
        <topology evidence="1">Peripheral membrane protein</topology>
    </subcellularLocation>
</comment>
<comment type="similarity">
    <text evidence="1">Belongs to the 4Fe4S bacterial-type ferredoxin family. RnfC subfamily.</text>
</comment>